<feature type="chain" id="PRO_1000073231" description="Large ribosomal subunit protein uL2">
    <location>
        <begin position="1"/>
        <end position="238"/>
    </location>
</feature>
<feature type="region of interest" description="Disordered" evidence="2">
    <location>
        <begin position="199"/>
        <end position="238"/>
    </location>
</feature>
<feature type="compositionally biased region" description="Polar residues" evidence="2">
    <location>
        <begin position="206"/>
        <end position="216"/>
    </location>
</feature>
<feature type="compositionally biased region" description="Basic residues" evidence="2">
    <location>
        <begin position="223"/>
        <end position="238"/>
    </location>
</feature>
<dbReference type="EMBL" id="CP000682">
    <property type="protein sequence ID" value="ABP94271.1"/>
    <property type="molecule type" value="Genomic_DNA"/>
</dbReference>
<dbReference type="RefSeq" id="WP_011921240.1">
    <property type="nucleotide sequence ID" value="NZ_CP139956.1"/>
</dbReference>
<dbReference type="SMR" id="A4YCW9"/>
<dbReference type="STRING" id="399549.Msed_0094"/>
<dbReference type="KEGG" id="mse:Msed_0094"/>
<dbReference type="eggNOG" id="arCOG04067">
    <property type="taxonomic scope" value="Archaea"/>
</dbReference>
<dbReference type="HOGENOM" id="CLU_036235_0_1_2"/>
<dbReference type="Proteomes" id="UP000000242">
    <property type="component" value="Chromosome"/>
</dbReference>
<dbReference type="GO" id="GO:0022625">
    <property type="term" value="C:cytosolic large ribosomal subunit"/>
    <property type="evidence" value="ECO:0007669"/>
    <property type="project" value="TreeGrafter"/>
</dbReference>
<dbReference type="GO" id="GO:0019843">
    <property type="term" value="F:rRNA binding"/>
    <property type="evidence" value="ECO:0007669"/>
    <property type="project" value="UniProtKB-UniRule"/>
</dbReference>
<dbReference type="GO" id="GO:0003735">
    <property type="term" value="F:structural constituent of ribosome"/>
    <property type="evidence" value="ECO:0007669"/>
    <property type="project" value="InterPro"/>
</dbReference>
<dbReference type="GO" id="GO:0002181">
    <property type="term" value="P:cytoplasmic translation"/>
    <property type="evidence" value="ECO:0007669"/>
    <property type="project" value="TreeGrafter"/>
</dbReference>
<dbReference type="FunFam" id="4.10.950.10:FF:000002">
    <property type="entry name" value="60S ribosomal protein L2"/>
    <property type="match status" value="1"/>
</dbReference>
<dbReference type="Gene3D" id="2.30.30.30">
    <property type="match status" value="1"/>
</dbReference>
<dbReference type="Gene3D" id="2.40.50.140">
    <property type="entry name" value="Nucleic acid-binding proteins"/>
    <property type="match status" value="1"/>
</dbReference>
<dbReference type="Gene3D" id="4.10.950.10">
    <property type="entry name" value="Ribosomal protein L2, domain 3"/>
    <property type="match status" value="1"/>
</dbReference>
<dbReference type="HAMAP" id="MF_01320_A">
    <property type="entry name" value="Ribosomal_uL2_A"/>
    <property type="match status" value="1"/>
</dbReference>
<dbReference type="InterPro" id="IPR012340">
    <property type="entry name" value="NA-bd_OB-fold"/>
</dbReference>
<dbReference type="InterPro" id="IPR014722">
    <property type="entry name" value="Rib_uL2_dom2"/>
</dbReference>
<dbReference type="InterPro" id="IPR002171">
    <property type="entry name" value="Ribosomal_uL2"/>
</dbReference>
<dbReference type="InterPro" id="IPR023672">
    <property type="entry name" value="Ribosomal_uL2_arc_euk"/>
</dbReference>
<dbReference type="InterPro" id="IPR022669">
    <property type="entry name" value="Ribosomal_uL2_C"/>
</dbReference>
<dbReference type="InterPro" id="IPR014726">
    <property type="entry name" value="Ribosomal_uL2_dom3"/>
</dbReference>
<dbReference type="InterPro" id="IPR022666">
    <property type="entry name" value="Ribosomal_uL2_RNA-bd_dom"/>
</dbReference>
<dbReference type="InterPro" id="IPR008991">
    <property type="entry name" value="Translation_prot_SH3-like_sf"/>
</dbReference>
<dbReference type="NCBIfam" id="NF007180">
    <property type="entry name" value="PRK09612.1"/>
    <property type="match status" value="1"/>
</dbReference>
<dbReference type="PANTHER" id="PTHR13691:SF16">
    <property type="entry name" value="LARGE RIBOSOMAL SUBUNIT PROTEIN UL2"/>
    <property type="match status" value="1"/>
</dbReference>
<dbReference type="PANTHER" id="PTHR13691">
    <property type="entry name" value="RIBOSOMAL PROTEIN L2"/>
    <property type="match status" value="1"/>
</dbReference>
<dbReference type="Pfam" id="PF00181">
    <property type="entry name" value="Ribosomal_L2"/>
    <property type="match status" value="1"/>
</dbReference>
<dbReference type="Pfam" id="PF03947">
    <property type="entry name" value="Ribosomal_L2_C"/>
    <property type="match status" value="1"/>
</dbReference>
<dbReference type="PIRSF" id="PIRSF002158">
    <property type="entry name" value="Ribosomal_L2"/>
    <property type="match status" value="1"/>
</dbReference>
<dbReference type="SMART" id="SM01383">
    <property type="entry name" value="Ribosomal_L2"/>
    <property type="match status" value="1"/>
</dbReference>
<dbReference type="SMART" id="SM01382">
    <property type="entry name" value="Ribosomal_L2_C"/>
    <property type="match status" value="1"/>
</dbReference>
<dbReference type="SUPFAM" id="SSF50249">
    <property type="entry name" value="Nucleic acid-binding proteins"/>
    <property type="match status" value="1"/>
</dbReference>
<dbReference type="SUPFAM" id="SSF50104">
    <property type="entry name" value="Translation proteins SH3-like domain"/>
    <property type="match status" value="1"/>
</dbReference>
<gene>
    <name evidence="1" type="primary">rpl2</name>
    <name type="ordered locus">Msed_0094</name>
</gene>
<sequence>MGKKLLQQRAGRGNINFRNPGWLRVGKVRYPTITGHHIAKVVDILHNPGMTEPVAKVKLDTGIQFFIPAVQGLISGQKIEVGEGSPASLGNIVPAKDLPEGVYVSNVELHRGDGGRYARTAGSYAIVVGKSEGKVILRLPSGKIKEIDENALVTVGTVAGGGVLEKPLLKAGNNYWKYKVKATKWPDVRGVAMNVVSHPHGGGLHQSVSRSSTVARNTPPGRKVGHIAARRTGRRDRK</sequence>
<accession>A4YCW9</accession>
<evidence type="ECO:0000255" key="1">
    <source>
        <dbReference type="HAMAP-Rule" id="MF_01320"/>
    </source>
</evidence>
<evidence type="ECO:0000256" key="2">
    <source>
        <dbReference type="SAM" id="MobiDB-lite"/>
    </source>
</evidence>
<evidence type="ECO:0000305" key="3"/>
<comment type="function">
    <text evidence="1">One of the primary rRNA binding proteins. Required for association of the 30S and 50S subunits to form the 70S ribosome, for tRNA binding and peptide bond formation. It has been suggested to have peptidyltransferase activity; this is somewhat controversial. Makes several contacts with the 16S rRNA in the 70S ribosome.</text>
</comment>
<comment type="subunit">
    <text evidence="1">Part of the 50S ribosomal subunit. Forms a bridge to the 30S subunit in the 70S ribosome.</text>
</comment>
<comment type="similarity">
    <text evidence="1">Belongs to the universal ribosomal protein uL2 family.</text>
</comment>
<protein>
    <recommendedName>
        <fullName evidence="1">Large ribosomal subunit protein uL2</fullName>
    </recommendedName>
    <alternativeName>
        <fullName evidence="3">50S ribosomal protein L2</fullName>
    </alternativeName>
</protein>
<name>RL2_METS5</name>
<reference key="1">
    <citation type="journal article" date="2008" name="Appl. Environ. Microbiol.">
        <title>The genome sequence of the metal-mobilizing, extremely thermoacidophilic archaeon Metallosphaera sedula provides insights into bioleaching-associated metabolism.</title>
        <authorList>
            <person name="Auernik K.S."/>
            <person name="Maezato Y."/>
            <person name="Blum P.H."/>
            <person name="Kelly R.M."/>
        </authorList>
    </citation>
    <scope>NUCLEOTIDE SEQUENCE [LARGE SCALE GENOMIC DNA]</scope>
    <source>
        <strain>ATCC 51363 / DSM 5348 / JCM 9185 / NBRC 15509 / TH2</strain>
    </source>
</reference>
<keyword id="KW-1185">Reference proteome</keyword>
<keyword id="KW-0687">Ribonucleoprotein</keyword>
<keyword id="KW-0689">Ribosomal protein</keyword>
<keyword id="KW-0694">RNA-binding</keyword>
<keyword id="KW-0699">rRNA-binding</keyword>
<proteinExistence type="inferred from homology"/>
<organism>
    <name type="scientific">Metallosphaera sedula (strain ATCC 51363 / DSM 5348 / JCM 9185 / NBRC 15509 / TH2)</name>
    <dbReference type="NCBI Taxonomy" id="399549"/>
    <lineage>
        <taxon>Archaea</taxon>
        <taxon>Thermoproteota</taxon>
        <taxon>Thermoprotei</taxon>
        <taxon>Sulfolobales</taxon>
        <taxon>Sulfolobaceae</taxon>
        <taxon>Metallosphaera</taxon>
    </lineage>
</organism>